<accession>Q9P2J2</accession>
<proteinExistence type="evidence at protein level"/>
<organism>
    <name type="scientific">Homo sapiens</name>
    <name type="common">Human</name>
    <dbReference type="NCBI Taxonomy" id="9606"/>
    <lineage>
        <taxon>Eukaryota</taxon>
        <taxon>Metazoa</taxon>
        <taxon>Chordata</taxon>
        <taxon>Craniata</taxon>
        <taxon>Vertebrata</taxon>
        <taxon>Euteleostomi</taxon>
        <taxon>Mammalia</taxon>
        <taxon>Eutheria</taxon>
        <taxon>Euarchontoglires</taxon>
        <taxon>Primates</taxon>
        <taxon>Haplorrhini</taxon>
        <taxon>Catarrhini</taxon>
        <taxon>Hominidae</taxon>
        <taxon>Homo</taxon>
    </lineage>
</organism>
<gene>
    <name type="primary">IGSF9</name>
    <name type="synonym">IGSF9A</name>
    <name type="synonym">KIAA1355</name>
    <name type="synonym">NRT1</name>
</gene>
<sequence>MVWCLGLAVLSLVISQGADGRGKPEVVSVVGRAGESVVLGCDLLPPAGRPPLHVIEWLRFGFLLPIFIQFGLYSPRIDPDYVGRVRLQKGASLQIEGLRVEDQGWYECRVFFLDQHIPEDDFANGSWVHLTVNSPPQFQETPPAVLEVQELEPVTLRCVARGSPLPHVTWKLRGKDLGQGQGQVQVQNGTLRIRRVERGSSGVYTCQASSTEGSATHATQLLVLGPPVIVVPPKNSTVNASQDVSLACHAEAYPANLTYSWFQDNINVFHISRLQPRVRILVDGSLRLLATQPDDAGCYTCVPSNGLLHPPSASAYLTVLYPAQVTAMPPETPLPIGMPGVIRCPVRANPPLLFVSWTKDGKALQLDKFPGWSQGTEGSLIIALGNEDALGEYSCTPYNSLGTAGPSPVTRVLLKAPPAFIERPKEEYFQEVGRELLIPCSAQGDPPPVVSWTKVGRGLQGQAQVDSNSSLILRPLTKEAHGHWECSASNAVARVATSTNVYVLGTSPHVVTNVSVVALPKGANVSWEPGFDGGYLQRFSVWYTPLAKRPDRMHHDWVSLAVPVGAAHLLVPGLQPHTQYQFSVLAQNKLGSGPFSEIVLSAPEGLPTTPAAPGLPPTEIPPPLSPPRGLVAVRTPRGVLLHWDPPELVPKRLDGYVLEGRQGSQGWEVLDPAVAGTETELLVPGLIKDVLYEFRLVAFAGSFVSDPSNTANVSTSGLEVYPSRTQLPGLLPQPVLAGVVGGVCFLGVAVLVSILAGCLLNRRRAARRRRKRLRQDPPLIFSPTGKSAAPSALGSGSPDSVAKLKLQGSPVPSLRQSLLWGDPAGTPSPHPDPPSSRGPLPLEPICRGPDGRFVMGPTVAAPQERSGREQAEPRTPAQRLARSFDCSSSSPSGAPQPLCIEDISPVAPPPAAPPSPLPGPGPLLQYLSLPFFREMNVDGDWPPLEEPSPAAPPDYMDTRRCPTSSFLRSPETPPVSPRESLPGAVVGAGATAEPPYTALADWTLRERLLPGLLPAAPRGSLTSQSSGRGSASFLRPPSTAPSAGGSYLSPAPGDTSSWASGPERWPRREHVVTVSKRRNTSVDENYEWDSEFPGDMELLETLHLGLASSRLRPEAEPELGVKTPEEGCLLNTAHVTGPEARCAALREEFLAFRRRRDATRARLPAYRQPVPHPEQATLL</sequence>
<feature type="signal peptide" evidence="3">
    <location>
        <begin position="1"/>
        <end position="20"/>
    </location>
</feature>
<feature type="chain" id="PRO_0000306107" description="Protein turtle homolog A">
    <location>
        <begin position="21"/>
        <end position="1179"/>
    </location>
</feature>
<feature type="topological domain" description="Extracellular" evidence="3">
    <location>
        <begin position="21"/>
        <end position="734"/>
    </location>
</feature>
<feature type="transmembrane region" description="Helical" evidence="3">
    <location>
        <begin position="735"/>
        <end position="755"/>
    </location>
</feature>
<feature type="topological domain" description="Cytoplasmic" evidence="3">
    <location>
        <begin position="756"/>
        <end position="1179"/>
    </location>
</feature>
<feature type="domain" description="Ig-like 1">
    <location>
        <begin position="24"/>
        <end position="124"/>
    </location>
</feature>
<feature type="domain" description="Ig-like 2">
    <location>
        <begin position="136"/>
        <end position="216"/>
    </location>
</feature>
<feature type="domain" description="Ig-like 3">
    <location>
        <begin position="226"/>
        <end position="318"/>
    </location>
</feature>
<feature type="domain" description="Ig-like 4">
    <location>
        <begin position="322"/>
        <end position="410"/>
    </location>
</feature>
<feature type="domain" description="Ig-like 5">
    <location>
        <begin position="418"/>
        <end position="502"/>
    </location>
</feature>
<feature type="domain" description="Fibronectin type-III 1" evidence="5">
    <location>
        <begin position="507"/>
        <end position="611"/>
    </location>
</feature>
<feature type="domain" description="Fibronectin type-III 2" evidence="5">
    <location>
        <begin position="623"/>
        <end position="718"/>
    </location>
</feature>
<feature type="region of interest" description="Disordered" evidence="6">
    <location>
        <begin position="606"/>
        <end position="626"/>
    </location>
</feature>
<feature type="region of interest" description="Disordered" evidence="6">
    <location>
        <begin position="767"/>
        <end position="919"/>
    </location>
</feature>
<feature type="region of interest" description="Disordered" evidence="6">
    <location>
        <begin position="940"/>
        <end position="988"/>
    </location>
</feature>
<feature type="region of interest" description="Disordered" evidence="6">
    <location>
        <begin position="1015"/>
        <end position="1079"/>
    </location>
</feature>
<feature type="short sequence motif" description="PDZ-binding" evidence="1">
    <location>
        <begin position="1177"/>
        <end position="1179"/>
    </location>
</feature>
<feature type="compositionally biased region" description="Pro residues" evidence="6">
    <location>
        <begin position="613"/>
        <end position="626"/>
    </location>
</feature>
<feature type="compositionally biased region" description="Low complexity" evidence="6">
    <location>
        <begin position="785"/>
        <end position="800"/>
    </location>
</feature>
<feature type="compositionally biased region" description="Pro residues" evidence="6">
    <location>
        <begin position="826"/>
        <end position="836"/>
    </location>
</feature>
<feature type="compositionally biased region" description="Pro residues" evidence="6">
    <location>
        <begin position="906"/>
        <end position="919"/>
    </location>
</feature>
<feature type="modified residue" description="Phosphoserine" evidence="2">
    <location>
        <position position="809"/>
    </location>
</feature>
<feature type="modified residue" description="Phosphothreonine" evidence="11">
    <location>
        <position position="972"/>
    </location>
</feature>
<feature type="glycosylation site" description="N-linked (GlcNAc...) asparagine" evidence="3">
    <location>
        <position position="188"/>
    </location>
</feature>
<feature type="glycosylation site" description="N-linked (GlcNAc...) asparagine" evidence="3">
    <location>
        <position position="256"/>
    </location>
</feature>
<feature type="glycosylation site" description="N-linked (GlcNAc...) asparagine" evidence="3">
    <location>
        <position position="513"/>
    </location>
</feature>
<feature type="glycosylation site" description="N-linked (GlcNAc...) asparagine" evidence="3">
    <location>
        <position position="524"/>
    </location>
</feature>
<feature type="disulfide bond" evidence="4">
    <location>
        <begin position="41"/>
        <end position="108"/>
    </location>
</feature>
<feature type="disulfide bond" evidence="4">
    <location>
        <begin position="158"/>
        <end position="206"/>
    </location>
</feature>
<feature type="disulfide bond" evidence="4">
    <location>
        <begin position="248"/>
        <end position="301"/>
    </location>
</feature>
<feature type="disulfide bond" evidence="4">
    <location>
        <begin position="344"/>
        <end position="395"/>
    </location>
</feature>
<feature type="disulfide bond" evidence="4">
    <location>
        <begin position="440"/>
        <end position="486"/>
    </location>
</feature>
<feature type="splice variant" id="VSP_047195" description="In isoform 2." evidence="9">
    <original>YPAQVTAMPPETPLPIG</original>
    <variation>C</variation>
    <location>
        <begin position="321"/>
        <end position="337"/>
    </location>
</feature>
<feature type="sequence variant" id="VAR_035256" description="In dbSNP:rs3747617." evidence="8">
    <original>G</original>
    <variation>E</variation>
    <location>
        <position position="34"/>
    </location>
</feature>
<feature type="sequence variant" id="VAR_035257" description="In dbSNP:rs16842846.">
    <original>R</original>
    <variation>P</variation>
    <location>
        <position position="474"/>
    </location>
</feature>
<feature type="sequence variant" id="VAR_035258" description="In dbSNP:rs35574000.">
    <original>P</original>
    <variation>L</variation>
    <location>
        <position position="914"/>
    </location>
</feature>
<feature type="sequence variant" id="VAR_035259" description="In dbSNP:rs34749866.">
    <original>S</original>
    <variation>T</variation>
    <location>
        <position position="1026"/>
    </location>
</feature>
<feature type="sequence variant" id="VAR_035260" description="In dbSNP:rs1319080." evidence="8">
    <original>P</original>
    <variation>T</variation>
    <location>
        <position position="1117"/>
    </location>
</feature>
<feature type="sequence conflict" description="In Ref. 2; AAH30141." evidence="10" ref="2">
    <original>R</original>
    <variation>Q</variation>
    <location>
        <position position="279"/>
    </location>
</feature>
<feature type="strand" evidence="12">
    <location>
        <begin position="628"/>
        <end position="634"/>
    </location>
</feature>
<feature type="strand" evidence="12">
    <location>
        <begin position="636"/>
        <end position="644"/>
    </location>
</feature>
<feature type="strand" evidence="12">
    <location>
        <begin position="655"/>
        <end position="662"/>
    </location>
</feature>
<feature type="strand" evidence="12">
    <location>
        <begin position="668"/>
        <end position="674"/>
    </location>
</feature>
<feature type="strand" evidence="12">
    <location>
        <begin position="680"/>
        <end position="682"/>
    </location>
</feature>
<feature type="strand" evidence="12">
    <location>
        <begin position="696"/>
        <end position="700"/>
    </location>
</feature>
<feature type="strand" evidence="12">
    <location>
        <begin position="703"/>
        <end position="707"/>
    </location>
</feature>
<keyword id="KW-0002">3D-structure</keyword>
<keyword id="KW-0025">Alternative splicing</keyword>
<keyword id="KW-1003">Cell membrane</keyword>
<keyword id="KW-0217">Developmental protein</keyword>
<keyword id="KW-0221">Differentiation</keyword>
<keyword id="KW-1015">Disulfide bond</keyword>
<keyword id="KW-0325">Glycoprotein</keyword>
<keyword id="KW-0393">Immunoglobulin domain</keyword>
<keyword id="KW-0472">Membrane</keyword>
<keyword id="KW-0524">Neurogenesis</keyword>
<keyword id="KW-0597">Phosphoprotein</keyword>
<keyword id="KW-1267">Proteomics identification</keyword>
<keyword id="KW-1185">Reference proteome</keyword>
<keyword id="KW-0677">Repeat</keyword>
<keyword id="KW-0732">Signal</keyword>
<keyword id="KW-0770">Synapse</keyword>
<keyword id="KW-0812">Transmembrane</keyword>
<keyword id="KW-1133">Transmembrane helix</keyword>
<protein>
    <recommendedName>
        <fullName>Protein turtle homolog A</fullName>
    </recommendedName>
    <alternativeName>
        <fullName>Immunoglobulin superfamily member 9A</fullName>
        <shortName>IgSF9A</shortName>
    </alternativeName>
</protein>
<evidence type="ECO:0000250" key="1"/>
<evidence type="ECO:0000250" key="2">
    <source>
        <dbReference type="UniProtKB" id="P0C5H6"/>
    </source>
</evidence>
<evidence type="ECO:0000255" key="3"/>
<evidence type="ECO:0000255" key="4">
    <source>
        <dbReference type="PROSITE-ProRule" id="PRU00114"/>
    </source>
</evidence>
<evidence type="ECO:0000255" key="5">
    <source>
        <dbReference type="PROSITE-ProRule" id="PRU00316"/>
    </source>
</evidence>
<evidence type="ECO:0000256" key="6">
    <source>
        <dbReference type="SAM" id="MobiDB-lite"/>
    </source>
</evidence>
<evidence type="ECO:0000269" key="7">
    <source>
    </source>
</evidence>
<evidence type="ECO:0000269" key="8">
    <source>
    </source>
</evidence>
<evidence type="ECO:0000303" key="9">
    <source>
    </source>
</evidence>
<evidence type="ECO:0000305" key="10"/>
<evidence type="ECO:0007744" key="11">
    <source>
    </source>
</evidence>
<evidence type="ECO:0007829" key="12">
    <source>
        <dbReference type="PDB" id="1V5J"/>
    </source>
</evidence>
<name>TUTLA_HUMAN</name>
<reference key="1">
    <citation type="journal article" date="2000" name="DNA Res.">
        <title>Prediction of the coding sequences of unidentified human genes. XVI. The complete sequences of 150 new cDNA clones from brain which code for large proteins in vitro.</title>
        <authorList>
            <person name="Nagase T."/>
            <person name="Kikuno R."/>
            <person name="Ishikawa K."/>
            <person name="Hirosawa M."/>
            <person name="Ohara O."/>
        </authorList>
    </citation>
    <scope>NUCLEOTIDE SEQUENCE [LARGE SCALE MRNA] (ISOFORM 1)</scope>
    <source>
        <tissue>Brain</tissue>
    </source>
</reference>
<reference key="2">
    <citation type="journal article" date="2004" name="Genome Res.">
        <title>The status, quality, and expansion of the NIH full-length cDNA project: the Mammalian Gene Collection (MGC).</title>
        <authorList>
            <consortium name="The MGC Project Team"/>
        </authorList>
    </citation>
    <scope>NUCLEOTIDE SEQUENCE [LARGE SCALE MRNA] (ISOFORM 2)</scope>
    <scope>VARIANTS GLU-34 AND THR-1117</scope>
    <source>
        <tissue>Neuroblastoma</tissue>
    </source>
</reference>
<reference key="3">
    <citation type="journal article" date="2002" name="Genomics">
        <title>Cloning and characterization of Igsf9 in mouse and human: a new member of the immunoglobulin superfamily expressed in the developing nervous system.</title>
        <authorList>
            <person name="Doudney K."/>
            <person name="Murdoch J.N."/>
            <person name="Braybrook C."/>
            <person name="Paternotte C."/>
            <person name="Bentley L."/>
            <person name="Copp A.J."/>
            <person name="Stanier P."/>
        </authorList>
    </citation>
    <scope>DEVELOPMENTAL STAGE</scope>
</reference>
<reference key="4">
    <citation type="journal article" date="2014" name="J. Proteomics">
        <title>An enzyme assisted RP-RPLC approach for in-depth analysis of human liver phosphoproteome.</title>
        <authorList>
            <person name="Bian Y."/>
            <person name="Song C."/>
            <person name="Cheng K."/>
            <person name="Dong M."/>
            <person name="Wang F."/>
            <person name="Huang J."/>
            <person name="Sun D."/>
            <person name="Wang L."/>
            <person name="Ye M."/>
            <person name="Zou H."/>
        </authorList>
    </citation>
    <scope>PHOSPHORYLATION [LARGE SCALE ANALYSIS] AT THR-972</scope>
    <scope>IDENTIFICATION BY MASS SPECTROMETRY [LARGE SCALE ANALYSIS]</scope>
    <source>
        <tissue>Liver</tissue>
    </source>
</reference>
<reference key="5">
    <citation type="submission" date="2004-05" db="PDB data bank">
        <title>Solution structure of RSGI RUH-008, a FN3 domain in human cDNA.</title>
        <authorList>
            <consortium name="RIKEN structural genomics initiative (RSGI)"/>
        </authorList>
    </citation>
    <scope>STRUCTURE BY NMR OF 624-718</scope>
</reference>
<comment type="function">
    <text evidence="1">Functions in dendrite outgrowth and synapse maturation.</text>
</comment>
<comment type="subunit">
    <text evidence="1">Interacts with MAGI2 and SHANK1.</text>
</comment>
<comment type="interaction">
    <interactant intactId="EBI-17451184">
        <id>Q9P2J2-2</id>
    </interactant>
    <interactant intactId="EBI-1058710">
        <id>O43169</id>
        <label>CYB5B</label>
    </interactant>
    <organismsDiffer>false</organismsDiffer>
    <experiments>3</experiments>
</comment>
<comment type="interaction">
    <interactant intactId="EBI-17451184">
        <id>Q9P2J2-2</id>
    </interactant>
    <interactant intactId="EBI-10316423">
        <id>Q9NXK6</id>
        <label>PAQR5</label>
    </interactant>
    <organismsDiffer>false</organismsDiffer>
    <experiments>3</experiments>
</comment>
<comment type="interaction">
    <interactant intactId="EBI-17451184">
        <id>Q9P2J2-2</id>
    </interactant>
    <interactant intactId="EBI-6656213">
        <id>Q6PI78</id>
        <label>TMEM65</label>
    </interactant>
    <organismsDiffer>false</organismsDiffer>
    <experiments>3</experiments>
</comment>
<comment type="subcellular location">
    <subcellularLocation>
        <location evidence="1">Cell membrane</location>
        <topology evidence="1">Single-pass type I membrane protein</topology>
    </subcellularLocation>
    <subcellularLocation>
        <location evidence="1">Synapse</location>
    </subcellularLocation>
    <text evidence="1">Enriched at the excitatory synapses in mature neurons.</text>
</comment>
<comment type="alternative products">
    <event type="alternative splicing"/>
    <isoform>
        <id>Q9P2J2-1</id>
        <name>1</name>
        <sequence type="displayed"/>
    </isoform>
    <isoform>
        <id>Q9P2J2-2</id>
        <name>2</name>
        <sequence type="described" ref="VSP_047195"/>
    </isoform>
</comment>
<comment type="developmental stage">
    <text evidence="7">Expressed in a wide variety of tissues at 8 and 14 weeks of gestation.</text>
</comment>
<comment type="domain">
    <text evidence="1">The PDZ-binding motif mediates interactions with MAGI2 and SHANK1.</text>
</comment>
<comment type="similarity">
    <text evidence="10">Belongs to the immunoglobulin superfamily. Turtle family.</text>
</comment>
<comment type="sequence caution" evidence="10">
    <conflict type="erroneous initiation">
        <sequence resource="EMBL-CDS" id="BAA92593"/>
    </conflict>
</comment>
<dbReference type="EMBL" id="AB037776">
    <property type="protein sequence ID" value="BAA92593.1"/>
    <property type="status" value="ALT_INIT"/>
    <property type="molecule type" value="mRNA"/>
</dbReference>
<dbReference type="EMBL" id="BC030141">
    <property type="protein sequence ID" value="AAH30141.1"/>
    <property type="molecule type" value="mRNA"/>
</dbReference>
<dbReference type="CCDS" id="CCDS1190.1">
    <molecule id="Q9P2J2-2"/>
</dbReference>
<dbReference type="CCDS" id="CCDS44254.1">
    <molecule id="Q9P2J2-1"/>
</dbReference>
<dbReference type="RefSeq" id="NP_001128522.1">
    <molecule id="Q9P2J2-1"/>
    <property type="nucleotide sequence ID" value="NM_001135050.2"/>
</dbReference>
<dbReference type="RefSeq" id="NP_065840.2">
    <molecule id="Q9P2J2-2"/>
    <property type="nucleotide sequence ID" value="NM_020789.4"/>
</dbReference>
<dbReference type="PDB" id="1V5J">
    <property type="method" value="NMR"/>
    <property type="chains" value="A=624-718"/>
</dbReference>
<dbReference type="PDBsum" id="1V5J"/>
<dbReference type="SMR" id="Q9P2J2"/>
<dbReference type="BioGRID" id="121606">
    <property type="interactions" value="9"/>
</dbReference>
<dbReference type="FunCoup" id="Q9P2J2">
    <property type="interactions" value="478"/>
</dbReference>
<dbReference type="IntAct" id="Q9P2J2">
    <property type="interactions" value="9"/>
</dbReference>
<dbReference type="MINT" id="Q9P2J2"/>
<dbReference type="STRING" id="9606.ENSP00000357073"/>
<dbReference type="GlyConnect" id="1670">
    <property type="glycosylation" value="4 N-Linked glycans (1 site)"/>
</dbReference>
<dbReference type="GlyCosmos" id="Q9P2J2">
    <property type="glycosylation" value="4 sites, 4 glycans"/>
</dbReference>
<dbReference type="GlyGen" id="Q9P2J2">
    <property type="glycosylation" value="6 sites, 6 N-linked glycans (2 sites)"/>
</dbReference>
<dbReference type="iPTMnet" id="Q9P2J2"/>
<dbReference type="PhosphoSitePlus" id="Q9P2J2"/>
<dbReference type="BioMuta" id="IGSF9"/>
<dbReference type="DMDM" id="158706515"/>
<dbReference type="jPOST" id="Q9P2J2"/>
<dbReference type="MassIVE" id="Q9P2J2"/>
<dbReference type="PaxDb" id="9606-ENSP00000357073"/>
<dbReference type="PeptideAtlas" id="Q9P2J2"/>
<dbReference type="ProteomicsDB" id="83820">
    <molecule id="Q9P2J2-1"/>
</dbReference>
<dbReference type="Antibodypedia" id="34263">
    <property type="antibodies" value="83 antibodies from 20 providers"/>
</dbReference>
<dbReference type="DNASU" id="57549"/>
<dbReference type="Ensembl" id="ENST00000361509.7">
    <molecule id="Q9P2J2-2"/>
    <property type="protein sequence ID" value="ENSP00000355049.3"/>
    <property type="gene ID" value="ENSG00000085552.18"/>
</dbReference>
<dbReference type="Ensembl" id="ENST00000368094.6">
    <molecule id="Q9P2J2-1"/>
    <property type="protein sequence ID" value="ENSP00000357073.1"/>
    <property type="gene ID" value="ENSG00000085552.18"/>
</dbReference>
<dbReference type="GeneID" id="57549"/>
<dbReference type="KEGG" id="hsa:57549"/>
<dbReference type="MANE-Select" id="ENST00000368094.6">
    <property type="protein sequence ID" value="ENSP00000357073.1"/>
    <property type="RefSeq nucleotide sequence ID" value="NM_001135050.2"/>
    <property type="RefSeq protein sequence ID" value="NP_001128522.1"/>
</dbReference>
<dbReference type="UCSC" id="uc001fuq.2">
    <molecule id="Q9P2J2-1"/>
    <property type="organism name" value="human"/>
</dbReference>
<dbReference type="AGR" id="HGNC:18132"/>
<dbReference type="CTD" id="57549"/>
<dbReference type="DisGeNET" id="57549"/>
<dbReference type="GeneCards" id="IGSF9"/>
<dbReference type="HGNC" id="HGNC:18132">
    <property type="gene designation" value="IGSF9"/>
</dbReference>
<dbReference type="HPA" id="ENSG00000085552">
    <property type="expression patterns" value="Tissue enhanced (liver, retina, skin)"/>
</dbReference>
<dbReference type="MIM" id="609738">
    <property type="type" value="gene"/>
</dbReference>
<dbReference type="neXtProt" id="NX_Q9P2J2"/>
<dbReference type="OpenTargets" id="ENSG00000085552"/>
<dbReference type="PharmGKB" id="PA38508"/>
<dbReference type="VEuPathDB" id="HostDB:ENSG00000085552"/>
<dbReference type="eggNOG" id="KOG3510">
    <property type="taxonomic scope" value="Eukaryota"/>
</dbReference>
<dbReference type="GeneTree" id="ENSGT00940000160444"/>
<dbReference type="HOGENOM" id="CLU_008130_2_0_1"/>
<dbReference type="InParanoid" id="Q9P2J2"/>
<dbReference type="OMA" id="FVMGPNV"/>
<dbReference type="OrthoDB" id="6234674at2759"/>
<dbReference type="PAN-GO" id="Q9P2J2">
    <property type="GO annotations" value="6 GO annotations based on evolutionary models"/>
</dbReference>
<dbReference type="PhylomeDB" id="Q9P2J2"/>
<dbReference type="TreeFam" id="TF326128"/>
<dbReference type="PathwayCommons" id="Q9P2J2"/>
<dbReference type="SignaLink" id="Q9P2J2"/>
<dbReference type="BioGRID-ORCS" id="57549">
    <property type="hits" value="14 hits in 1143 CRISPR screens"/>
</dbReference>
<dbReference type="ChiTaRS" id="IGSF9">
    <property type="organism name" value="human"/>
</dbReference>
<dbReference type="EvolutionaryTrace" id="Q9P2J2"/>
<dbReference type="GenomeRNAi" id="57549"/>
<dbReference type="Pharos" id="Q9P2J2">
    <property type="development level" value="Tbio"/>
</dbReference>
<dbReference type="PRO" id="PR:Q9P2J2"/>
<dbReference type="Proteomes" id="UP000005640">
    <property type="component" value="Chromosome 1"/>
</dbReference>
<dbReference type="RNAct" id="Q9P2J2">
    <property type="molecule type" value="protein"/>
</dbReference>
<dbReference type="Bgee" id="ENSG00000085552">
    <property type="expression patterns" value="Expressed in mucosa of transverse colon and 137 other cell types or tissues"/>
</dbReference>
<dbReference type="ExpressionAtlas" id="Q9P2J2">
    <property type="expression patterns" value="baseline and differential"/>
</dbReference>
<dbReference type="GO" id="GO:0030424">
    <property type="term" value="C:axon"/>
    <property type="evidence" value="ECO:0000318"/>
    <property type="project" value="GO_Central"/>
</dbReference>
<dbReference type="GO" id="GO:0030425">
    <property type="term" value="C:dendrite"/>
    <property type="evidence" value="ECO:0007669"/>
    <property type="project" value="Ensembl"/>
</dbReference>
<dbReference type="GO" id="GO:0098978">
    <property type="term" value="C:glutamatergic synapse"/>
    <property type="evidence" value="ECO:0007669"/>
    <property type="project" value="Ensembl"/>
</dbReference>
<dbReference type="GO" id="GO:0060077">
    <property type="term" value="C:inhibitory synapse"/>
    <property type="evidence" value="ECO:0007669"/>
    <property type="project" value="Ensembl"/>
</dbReference>
<dbReference type="GO" id="GO:0005886">
    <property type="term" value="C:plasma membrane"/>
    <property type="evidence" value="ECO:0000318"/>
    <property type="project" value="GO_Central"/>
</dbReference>
<dbReference type="GO" id="GO:0098839">
    <property type="term" value="C:postsynaptic density membrane"/>
    <property type="evidence" value="ECO:0007669"/>
    <property type="project" value="Ensembl"/>
</dbReference>
<dbReference type="GO" id="GO:0098632">
    <property type="term" value="F:cell-cell adhesion mediator activity"/>
    <property type="evidence" value="ECO:0000318"/>
    <property type="project" value="GO_Central"/>
</dbReference>
<dbReference type="GO" id="GO:0007411">
    <property type="term" value="P:axon guidance"/>
    <property type="evidence" value="ECO:0000318"/>
    <property type="project" value="GO_Central"/>
</dbReference>
<dbReference type="GO" id="GO:0016358">
    <property type="term" value="P:dendrite development"/>
    <property type="evidence" value="ECO:0007669"/>
    <property type="project" value="Ensembl"/>
</dbReference>
<dbReference type="GO" id="GO:0070593">
    <property type="term" value="P:dendrite self-avoidance"/>
    <property type="evidence" value="ECO:0000318"/>
    <property type="project" value="GO_Central"/>
</dbReference>
<dbReference type="GO" id="GO:0007156">
    <property type="term" value="P:homophilic cell adhesion via plasma membrane adhesion molecules"/>
    <property type="evidence" value="ECO:0000318"/>
    <property type="project" value="GO_Central"/>
</dbReference>
<dbReference type="GO" id="GO:0090128">
    <property type="term" value="P:regulation of synapse maturation"/>
    <property type="evidence" value="ECO:0007669"/>
    <property type="project" value="Ensembl"/>
</dbReference>
<dbReference type="CDD" id="cd00063">
    <property type="entry name" value="FN3"/>
    <property type="match status" value="2"/>
</dbReference>
<dbReference type="CDD" id="cd00096">
    <property type="entry name" value="Ig"/>
    <property type="match status" value="1"/>
</dbReference>
<dbReference type="FunFam" id="2.60.40.10:FF:000272">
    <property type="entry name" value="Immunoglobulin superfamily member 9B"/>
    <property type="match status" value="1"/>
</dbReference>
<dbReference type="FunFam" id="2.60.40.10:FF:000323">
    <property type="entry name" value="Immunoglobulin superfamily member 9B"/>
    <property type="match status" value="1"/>
</dbReference>
<dbReference type="FunFam" id="2.60.40.10:FF:000389">
    <property type="entry name" value="Immunoglobulin superfamily member 9B"/>
    <property type="match status" value="1"/>
</dbReference>
<dbReference type="FunFam" id="2.60.40.10:FF:001243">
    <property type="entry name" value="Protein turtle homolog A"/>
    <property type="match status" value="1"/>
</dbReference>
<dbReference type="FunFam" id="2.60.40.10:FF:000226">
    <property type="entry name" value="protein turtle homolog B"/>
    <property type="match status" value="1"/>
</dbReference>
<dbReference type="FunFam" id="2.60.40.10:FF:000245">
    <property type="entry name" value="protein turtle homolog B isoform X2"/>
    <property type="match status" value="1"/>
</dbReference>
<dbReference type="FunFam" id="2.60.40.10:FF:000321">
    <property type="entry name" value="protein turtle homolog B isoform X2"/>
    <property type="match status" value="1"/>
</dbReference>
<dbReference type="Gene3D" id="2.60.40.10">
    <property type="entry name" value="Immunoglobulins"/>
    <property type="match status" value="7"/>
</dbReference>
<dbReference type="InterPro" id="IPR003961">
    <property type="entry name" value="FN3_dom"/>
</dbReference>
<dbReference type="InterPro" id="IPR036116">
    <property type="entry name" value="FN3_sf"/>
</dbReference>
<dbReference type="InterPro" id="IPR007110">
    <property type="entry name" value="Ig-like_dom"/>
</dbReference>
<dbReference type="InterPro" id="IPR036179">
    <property type="entry name" value="Ig-like_dom_sf"/>
</dbReference>
<dbReference type="InterPro" id="IPR013783">
    <property type="entry name" value="Ig-like_fold"/>
</dbReference>
<dbReference type="InterPro" id="IPR003599">
    <property type="entry name" value="Ig_sub"/>
</dbReference>
<dbReference type="InterPro" id="IPR003598">
    <property type="entry name" value="Ig_sub2"/>
</dbReference>
<dbReference type="InterPro" id="IPR051170">
    <property type="entry name" value="Neural/epithelial_adhesion"/>
</dbReference>
<dbReference type="PANTHER" id="PTHR12231">
    <property type="entry name" value="CTX-RELATED TYPE I TRANSMEMBRANE PROTEIN"/>
    <property type="match status" value="1"/>
</dbReference>
<dbReference type="PANTHER" id="PTHR12231:SF244">
    <property type="entry name" value="PROTEIN TURTLE HOMOLOG A"/>
    <property type="match status" value="1"/>
</dbReference>
<dbReference type="Pfam" id="PF00041">
    <property type="entry name" value="fn3"/>
    <property type="match status" value="2"/>
</dbReference>
<dbReference type="Pfam" id="PF13927">
    <property type="entry name" value="Ig_3"/>
    <property type="match status" value="3"/>
</dbReference>
<dbReference type="SMART" id="SM00060">
    <property type="entry name" value="FN3"/>
    <property type="match status" value="2"/>
</dbReference>
<dbReference type="SMART" id="SM00409">
    <property type="entry name" value="IG"/>
    <property type="match status" value="5"/>
</dbReference>
<dbReference type="SMART" id="SM00408">
    <property type="entry name" value="IGc2"/>
    <property type="match status" value="5"/>
</dbReference>
<dbReference type="SUPFAM" id="SSF49265">
    <property type="entry name" value="Fibronectin type III"/>
    <property type="match status" value="1"/>
</dbReference>
<dbReference type="SUPFAM" id="SSF48726">
    <property type="entry name" value="Immunoglobulin"/>
    <property type="match status" value="5"/>
</dbReference>
<dbReference type="PROSITE" id="PS50853">
    <property type="entry name" value="FN3"/>
    <property type="match status" value="2"/>
</dbReference>
<dbReference type="PROSITE" id="PS50835">
    <property type="entry name" value="IG_LIKE"/>
    <property type="match status" value="5"/>
</dbReference>